<dbReference type="EMBL" id="AP010918">
    <property type="protein sequence ID" value="BAH26654.1"/>
    <property type="molecule type" value="Genomic_DNA"/>
</dbReference>
<dbReference type="RefSeq" id="WP_003412222.1">
    <property type="nucleotide sequence ID" value="NZ_CP014566.1"/>
</dbReference>
<dbReference type="SMR" id="C1AQS5"/>
<dbReference type="GeneID" id="45426349"/>
<dbReference type="KEGG" id="mbt:JTY_2370"/>
<dbReference type="HOGENOM" id="CLU_066632_1_1_11"/>
<dbReference type="GO" id="GO:0043590">
    <property type="term" value="C:bacterial nucleoid"/>
    <property type="evidence" value="ECO:0007669"/>
    <property type="project" value="TreeGrafter"/>
</dbReference>
<dbReference type="GO" id="GO:0006310">
    <property type="term" value="P:DNA recombination"/>
    <property type="evidence" value="ECO:0007669"/>
    <property type="project" value="UniProtKB-UniRule"/>
</dbReference>
<dbReference type="GO" id="GO:0006302">
    <property type="term" value="P:double-strand break repair"/>
    <property type="evidence" value="ECO:0007669"/>
    <property type="project" value="TreeGrafter"/>
</dbReference>
<dbReference type="FunFam" id="1.20.1440.120:FF:000002">
    <property type="entry name" value="DNA repair protein RecO"/>
    <property type="match status" value="1"/>
</dbReference>
<dbReference type="FunFam" id="2.40.50.140:FF:000176">
    <property type="entry name" value="DNA repair protein RecO"/>
    <property type="match status" value="1"/>
</dbReference>
<dbReference type="Gene3D" id="2.40.50.140">
    <property type="entry name" value="Nucleic acid-binding proteins"/>
    <property type="match status" value="1"/>
</dbReference>
<dbReference type="Gene3D" id="1.20.1440.120">
    <property type="entry name" value="Recombination protein O, C-terminal domain"/>
    <property type="match status" value="1"/>
</dbReference>
<dbReference type="HAMAP" id="MF_00201">
    <property type="entry name" value="RecO"/>
    <property type="match status" value="1"/>
</dbReference>
<dbReference type="InterPro" id="IPR037278">
    <property type="entry name" value="ARFGAP/RecO"/>
</dbReference>
<dbReference type="InterPro" id="IPR022572">
    <property type="entry name" value="DNA_rep/recomb_RecO_N"/>
</dbReference>
<dbReference type="InterPro" id="IPR012340">
    <property type="entry name" value="NA-bd_OB-fold"/>
</dbReference>
<dbReference type="InterPro" id="IPR003717">
    <property type="entry name" value="RecO"/>
</dbReference>
<dbReference type="InterPro" id="IPR042242">
    <property type="entry name" value="RecO_C"/>
</dbReference>
<dbReference type="NCBIfam" id="TIGR00613">
    <property type="entry name" value="reco"/>
    <property type="match status" value="1"/>
</dbReference>
<dbReference type="PANTHER" id="PTHR33991">
    <property type="entry name" value="DNA REPAIR PROTEIN RECO"/>
    <property type="match status" value="1"/>
</dbReference>
<dbReference type="PANTHER" id="PTHR33991:SF1">
    <property type="entry name" value="DNA REPAIR PROTEIN RECO"/>
    <property type="match status" value="1"/>
</dbReference>
<dbReference type="Pfam" id="PF02565">
    <property type="entry name" value="RecO_C"/>
    <property type="match status" value="1"/>
</dbReference>
<dbReference type="Pfam" id="PF11967">
    <property type="entry name" value="RecO_N"/>
    <property type="match status" value="1"/>
</dbReference>
<dbReference type="SUPFAM" id="SSF57863">
    <property type="entry name" value="ArfGap/RecO-like zinc finger"/>
    <property type="match status" value="1"/>
</dbReference>
<dbReference type="SUPFAM" id="SSF50249">
    <property type="entry name" value="Nucleic acid-binding proteins"/>
    <property type="match status" value="1"/>
</dbReference>
<reference key="1">
    <citation type="journal article" date="2009" name="Vaccine">
        <title>Whole genome sequence analysis of Mycobacterium bovis bacillus Calmette-Guerin (BCG) Tokyo 172: a comparative study of BCG vaccine substrains.</title>
        <authorList>
            <person name="Seki M."/>
            <person name="Honda I."/>
            <person name="Fujita I."/>
            <person name="Yano I."/>
            <person name="Yamamoto S."/>
            <person name="Koyama A."/>
        </authorList>
    </citation>
    <scope>NUCLEOTIDE SEQUENCE [LARGE SCALE GENOMIC DNA]</scope>
    <source>
        <strain>BCG / Tokyo 172 / ATCC 35737 / TMC 1019</strain>
    </source>
</reference>
<comment type="function">
    <text evidence="1">Involved in DNA repair and RecF pathway recombination.</text>
</comment>
<comment type="similarity">
    <text evidence="1">Belongs to the RecO family.</text>
</comment>
<name>RECO_MYCBT</name>
<keyword id="KW-0227">DNA damage</keyword>
<keyword id="KW-0233">DNA recombination</keyword>
<keyword id="KW-0234">DNA repair</keyword>
<proteinExistence type="inferred from homology"/>
<protein>
    <recommendedName>
        <fullName evidence="1">DNA repair protein RecO</fullName>
    </recommendedName>
    <alternativeName>
        <fullName evidence="1">Recombination protein O</fullName>
    </alternativeName>
</protein>
<sequence length="265" mass="28724">MRLYRDRAVVLRQHKLGEADRIVTLLTRDHGLVRAVAKGVRRTRSKFGARLEPFAHIEVQLHPGRNLDIVTQVVSVDAFATDIVADYGRYTCGCAILETAERLAGEERAPAPALHRLTVGALRAVADGQRPRDLLLDAYLLRAMGIAGWAPALTECARCATPGPHRAFHIATGGSVCAHCRPAGSTTPPLGVVDLMSALYDGDWEAAEAAPQSARSHVSGLVAAHLQWHLERQLKTLPLVERFYQADRSVAERRAALIGQDIAGG</sequence>
<feature type="chain" id="PRO_1000193398" description="DNA repair protein RecO">
    <location>
        <begin position="1"/>
        <end position="265"/>
    </location>
</feature>
<evidence type="ECO:0000255" key="1">
    <source>
        <dbReference type="HAMAP-Rule" id="MF_00201"/>
    </source>
</evidence>
<gene>
    <name evidence="1" type="primary">recO</name>
    <name type="ordered locus">JTY_2370</name>
</gene>
<accession>C1AQS5</accession>
<organism>
    <name type="scientific">Mycobacterium bovis (strain BCG / Tokyo 172 / ATCC 35737 / TMC 1019)</name>
    <dbReference type="NCBI Taxonomy" id="561275"/>
    <lineage>
        <taxon>Bacteria</taxon>
        <taxon>Bacillati</taxon>
        <taxon>Actinomycetota</taxon>
        <taxon>Actinomycetes</taxon>
        <taxon>Mycobacteriales</taxon>
        <taxon>Mycobacteriaceae</taxon>
        <taxon>Mycobacterium</taxon>
        <taxon>Mycobacterium tuberculosis complex</taxon>
    </lineage>
</organism>